<organism>
    <name type="scientific">Balaenoptera borealis</name>
    <name type="common">Sei whale</name>
    <name type="synonym">Pollack whale</name>
    <dbReference type="NCBI Taxonomy" id="9768"/>
    <lineage>
        <taxon>Eukaryota</taxon>
        <taxon>Metazoa</taxon>
        <taxon>Chordata</taxon>
        <taxon>Craniata</taxon>
        <taxon>Vertebrata</taxon>
        <taxon>Euteleostomi</taxon>
        <taxon>Mammalia</taxon>
        <taxon>Eutheria</taxon>
        <taxon>Laurasiatheria</taxon>
        <taxon>Artiodactyla</taxon>
        <taxon>Whippomorpha</taxon>
        <taxon>Cetacea</taxon>
        <taxon>Mysticeti</taxon>
        <taxon>Balaenopteridae</taxon>
        <taxon>Balaenoptera</taxon>
    </lineage>
</organism>
<dbReference type="EC" id="7.1.1.9"/>
<dbReference type="EMBL" id="AP006470">
    <property type="protein sequence ID" value="BAD91723.1"/>
    <property type="molecule type" value="Genomic_DNA"/>
</dbReference>
<dbReference type="RefSeq" id="YP_220748.1">
    <property type="nucleotide sequence ID" value="NC_006929.1"/>
</dbReference>
<dbReference type="SMR" id="Q599A0"/>
<dbReference type="GeneID" id="3337160"/>
<dbReference type="CTD" id="4513"/>
<dbReference type="GO" id="GO:0005743">
    <property type="term" value="C:mitochondrial inner membrane"/>
    <property type="evidence" value="ECO:0007669"/>
    <property type="project" value="UniProtKB-SubCell"/>
</dbReference>
<dbReference type="GO" id="GO:0045277">
    <property type="term" value="C:respiratory chain complex IV"/>
    <property type="evidence" value="ECO:0000250"/>
    <property type="project" value="UniProtKB"/>
</dbReference>
<dbReference type="GO" id="GO:0005507">
    <property type="term" value="F:copper ion binding"/>
    <property type="evidence" value="ECO:0007669"/>
    <property type="project" value="InterPro"/>
</dbReference>
<dbReference type="GO" id="GO:0004129">
    <property type="term" value="F:cytochrome-c oxidase activity"/>
    <property type="evidence" value="ECO:0007669"/>
    <property type="project" value="UniProtKB-EC"/>
</dbReference>
<dbReference type="GO" id="GO:0042773">
    <property type="term" value="P:ATP synthesis coupled electron transport"/>
    <property type="evidence" value="ECO:0007669"/>
    <property type="project" value="TreeGrafter"/>
</dbReference>
<dbReference type="CDD" id="cd13912">
    <property type="entry name" value="CcO_II_C"/>
    <property type="match status" value="1"/>
</dbReference>
<dbReference type="FunFam" id="1.10.287.90:FF:000001">
    <property type="entry name" value="Cytochrome c oxidase subunit 2"/>
    <property type="match status" value="1"/>
</dbReference>
<dbReference type="FunFam" id="2.60.40.420:FF:000001">
    <property type="entry name" value="Cytochrome c oxidase subunit 2"/>
    <property type="match status" value="1"/>
</dbReference>
<dbReference type="Gene3D" id="1.10.287.90">
    <property type="match status" value="1"/>
</dbReference>
<dbReference type="Gene3D" id="2.60.40.420">
    <property type="entry name" value="Cupredoxins - blue copper proteins"/>
    <property type="match status" value="1"/>
</dbReference>
<dbReference type="InterPro" id="IPR045187">
    <property type="entry name" value="CcO_II"/>
</dbReference>
<dbReference type="InterPro" id="IPR002429">
    <property type="entry name" value="CcO_II-like_C"/>
</dbReference>
<dbReference type="InterPro" id="IPR034210">
    <property type="entry name" value="CcO_II_C"/>
</dbReference>
<dbReference type="InterPro" id="IPR001505">
    <property type="entry name" value="Copper_CuA"/>
</dbReference>
<dbReference type="InterPro" id="IPR008972">
    <property type="entry name" value="Cupredoxin"/>
</dbReference>
<dbReference type="InterPro" id="IPR014222">
    <property type="entry name" value="Cyt_c_oxidase_su2"/>
</dbReference>
<dbReference type="InterPro" id="IPR011759">
    <property type="entry name" value="Cyt_c_oxidase_su2_TM_dom"/>
</dbReference>
<dbReference type="InterPro" id="IPR036257">
    <property type="entry name" value="Cyt_c_oxidase_su2_TM_sf"/>
</dbReference>
<dbReference type="NCBIfam" id="TIGR02866">
    <property type="entry name" value="CoxB"/>
    <property type="match status" value="1"/>
</dbReference>
<dbReference type="PANTHER" id="PTHR22888:SF9">
    <property type="entry name" value="CYTOCHROME C OXIDASE SUBUNIT 2"/>
    <property type="match status" value="1"/>
</dbReference>
<dbReference type="PANTHER" id="PTHR22888">
    <property type="entry name" value="CYTOCHROME C OXIDASE, SUBUNIT II"/>
    <property type="match status" value="1"/>
</dbReference>
<dbReference type="Pfam" id="PF00116">
    <property type="entry name" value="COX2"/>
    <property type="match status" value="1"/>
</dbReference>
<dbReference type="Pfam" id="PF02790">
    <property type="entry name" value="COX2_TM"/>
    <property type="match status" value="1"/>
</dbReference>
<dbReference type="PRINTS" id="PR01166">
    <property type="entry name" value="CYCOXIDASEII"/>
</dbReference>
<dbReference type="SUPFAM" id="SSF49503">
    <property type="entry name" value="Cupredoxins"/>
    <property type="match status" value="1"/>
</dbReference>
<dbReference type="SUPFAM" id="SSF81464">
    <property type="entry name" value="Cytochrome c oxidase subunit II-like, transmembrane region"/>
    <property type="match status" value="1"/>
</dbReference>
<dbReference type="PROSITE" id="PS00078">
    <property type="entry name" value="COX2"/>
    <property type="match status" value="1"/>
</dbReference>
<dbReference type="PROSITE" id="PS50857">
    <property type="entry name" value="COX2_CUA"/>
    <property type="match status" value="1"/>
</dbReference>
<dbReference type="PROSITE" id="PS50999">
    <property type="entry name" value="COX2_TM"/>
    <property type="match status" value="1"/>
</dbReference>
<name>COX2_BALBO</name>
<geneLocation type="mitochondrion"/>
<keyword id="KW-0186">Copper</keyword>
<keyword id="KW-0249">Electron transport</keyword>
<keyword id="KW-0460">Magnesium</keyword>
<keyword id="KW-0472">Membrane</keyword>
<keyword id="KW-0479">Metal-binding</keyword>
<keyword id="KW-0496">Mitochondrion</keyword>
<keyword id="KW-0999">Mitochondrion inner membrane</keyword>
<keyword id="KW-0679">Respiratory chain</keyword>
<keyword id="KW-1278">Translocase</keyword>
<keyword id="KW-0812">Transmembrane</keyword>
<keyword id="KW-1133">Transmembrane helix</keyword>
<keyword id="KW-0813">Transport</keyword>
<sequence length="227" mass="25972">MAYPFQLGFQDATSPIMEELLHFHDHTLMIVFLISSLVLYIITLMLTTKLTHTSTMDAQEVETVWTILPAIILILIALPSLRILYMMDEVNNPSLTVKTMGHQWYWSYEYTDYEDLSFDSYMIPTSDLKPGELRLLEVDNRVILPMEMTIRMLVSSEDVLHSWAVPSLGLKTDAIPGRLNQTTLMSTRPGLFYGQCSEICGSNHSFMPIVLELVPLEIFEKWSASML</sequence>
<protein>
    <recommendedName>
        <fullName>Cytochrome c oxidase subunit 2</fullName>
        <ecNumber>7.1.1.9</ecNumber>
    </recommendedName>
    <alternativeName>
        <fullName>Cytochrome c oxidase polypeptide II</fullName>
    </alternativeName>
</protein>
<gene>
    <name type="primary">MT-CO2</name>
    <name type="synonym">COII</name>
    <name type="synonym">COX2</name>
    <name type="synonym">COXII</name>
    <name type="synonym">MTCO2</name>
</gene>
<reference key="1">
    <citation type="journal article" date="2005" name="Syst. Biol.">
        <title>Mitochondrial phylogenetics and evolution of mysticete whales.</title>
        <authorList>
            <person name="Sasaki T."/>
            <person name="Nikaido M."/>
            <person name="Hamilton H."/>
            <person name="Goto M."/>
            <person name="Kato H."/>
            <person name="Kanda N."/>
            <person name="Pastene L.A."/>
            <person name="Cao Y."/>
            <person name="Fordyce R.E."/>
            <person name="Hasegawa M."/>
            <person name="Okada N."/>
        </authorList>
    </citation>
    <scope>NUCLEOTIDE SEQUENCE [GENOMIC DNA]</scope>
</reference>
<proteinExistence type="inferred from homology"/>
<comment type="function">
    <text evidence="2">Component of the cytochrome c oxidase, the last enzyme in the mitochondrial electron transport chain which drives oxidative phosphorylation. The respiratory chain contains 3 multisubunit complexes succinate dehydrogenase (complex II, CII), ubiquinol-cytochrome c oxidoreductase (cytochrome b-c1 complex, complex III, CIII) and cytochrome c oxidase (complex IV, CIV), that cooperate to transfer electrons derived from NADH and succinate to molecular oxygen, creating an electrochemical gradient over the inner membrane that drives transmembrane transport and the ATP synthase. Cytochrome c oxidase is the component of the respiratory chain that catalyzes the reduction of oxygen to water. Electrons originating from reduced cytochrome c in the intermembrane space (IMS) are transferred via the dinuclear copper A center (CU(A)) of subunit 2 and heme A of subunit 1 to the active site in subunit 1, a binuclear center (BNC) formed by heme A3 and copper B (CU(B)). The BNC reduces molecular oxygen to 2 water molecules using 4 electrons from cytochrome c in the IMS and 4 protons from the mitochondrial matrix.</text>
</comment>
<comment type="catalytic activity">
    <reaction evidence="2">
        <text>4 Fe(II)-[cytochrome c] + O2 + 8 H(+)(in) = 4 Fe(III)-[cytochrome c] + 2 H2O + 4 H(+)(out)</text>
        <dbReference type="Rhea" id="RHEA:11436"/>
        <dbReference type="Rhea" id="RHEA-COMP:10350"/>
        <dbReference type="Rhea" id="RHEA-COMP:14399"/>
        <dbReference type="ChEBI" id="CHEBI:15377"/>
        <dbReference type="ChEBI" id="CHEBI:15378"/>
        <dbReference type="ChEBI" id="CHEBI:15379"/>
        <dbReference type="ChEBI" id="CHEBI:29033"/>
        <dbReference type="ChEBI" id="CHEBI:29034"/>
        <dbReference type="EC" id="7.1.1.9"/>
    </reaction>
    <physiologicalReaction direction="left-to-right" evidence="2">
        <dbReference type="Rhea" id="RHEA:11437"/>
    </physiologicalReaction>
</comment>
<comment type="cofactor">
    <cofactor evidence="3">
        <name>Cu cation</name>
        <dbReference type="ChEBI" id="CHEBI:23378"/>
    </cofactor>
    <text evidence="3">Binds a dinuclear copper A center per subunit.</text>
</comment>
<comment type="subunit">
    <text evidence="1 3">Component of the cytochrome c oxidase (complex IV, CIV), a multisubunit enzyme composed of 14 subunits. The complex is composed of a catalytic core of 3 subunits MT-CO1, MT-CO2 and MT-CO3, encoded in the mitochondrial DNA, and 11 supernumerary subunits COX4I, COX5A, COX5B, COX6A, COX6B, COX6C, COX7A, COX7B, COX7C, COX8 and NDUFA4, which are encoded in the nuclear genome. The complex exists as a monomer or a dimer and forms supercomplexes (SCs) in the inner mitochondrial membrane with NADH-ubiquinone oxidoreductase (complex I, CI) and ubiquinol-cytochrome c oxidoreductase (cytochrome b-c1 complex, complex III, CIII), resulting in different assemblies (supercomplex SCI(1)III(2)IV(1) and megacomplex MCI(2)III(2)IV(2)) (By similarity). Found in a complex with TMEM177, COA6, COX18, COX20, SCO1 and SCO2. Interacts with TMEM177 in a COX20-dependent manner. Interacts with COX20. Interacts with COX16 (By similarity).</text>
</comment>
<comment type="subcellular location">
    <subcellularLocation>
        <location evidence="3">Mitochondrion inner membrane</location>
        <topology evidence="3">Multi-pass membrane protein</topology>
    </subcellularLocation>
</comment>
<comment type="similarity">
    <text evidence="4">Belongs to the cytochrome c oxidase subunit 2 family.</text>
</comment>
<accession>Q599A0</accession>
<feature type="chain" id="PRO_0000261576" description="Cytochrome c oxidase subunit 2">
    <location>
        <begin position="1"/>
        <end position="227"/>
    </location>
</feature>
<feature type="topological domain" description="Mitochondrial intermembrane" evidence="3">
    <location>
        <begin position="1"/>
        <end position="14"/>
    </location>
</feature>
<feature type="transmembrane region" description="Helical; Name=I" evidence="3">
    <location>
        <begin position="15"/>
        <end position="45"/>
    </location>
</feature>
<feature type="topological domain" description="Mitochondrial matrix" evidence="3">
    <location>
        <begin position="46"/>
        <end position="59"/>
    </location>
</feature>
<feature type="transmembrane region" description="Helical; Name=II" evidence="3">
    <location>
        <begin position="60"/>
        <end position="87"/>
    </location>
</feature>
<feature type="topological domain" description="Mitochondrial intermembrane" evidence="3">
    <location>
        <begin position="88"/>
        <end position="227"/>
    </location>
</feature>
<feature type="binding site" evidence="3">
    <location>
        <position position="161"/>
    </location>
    <ligand>
        <name>Cu cation</name>
        <dbReference type="ChEBI" id="CHEBI:23378"/>
        <label>A1</label>
    </ligand>
</feature>
<feature type="binding site" evidence="3">
    <location>
        <position position="196"/>
    </location>
    <ligand>
        <name>Cu cation</name>
        <dbReference type="ChEBI" id="CHEBI:23378"/>
        <label>A1</label>
    </ligand>
</feature>
<feature type="binding site" evidence="3">
    <location>
        <position position="196"/>
    </location>
    <ligand>
        <name>Cu cation</name>
        <dbReference type="ChEBI" id="CHEBI:23378"/>
        <label>A2</label>
    </ligand>
</feature>
<feature type="binding site" evidence="3">
    <location>
        <position position="198"/>
    </location>
    <ligand>
        <name>Cu cation</name>
        <dbReference type="ChEBI" id="CHEBI:23378"/>
        <label>A2</label>
    </ligand>
</feature>
<feature type="binding site" evidence="3">
    <location>
        <position position="198"/>
    </location>
    <ligand>
        <name>Mg(2+)</name>
        <dbReference type="ChEBI" id="CHEBI:18420"/>
        <note>ligand shared with MT-CO1</note>
    </ligand>
</feature>
<feature type="binding site" evidence="3">
    <location>
        <position position="200"/>
    </location>
    <ligand>
        <name>Cu cation</name>
        <dbReference type="ChEBI" id="CHEBI:23378"/>
        <label>A1</label>
    </ligand>
</feature>
<feature type="binding site" evidence="3">
    <location>
        <position position="200"/>
    </location>
    <ligand>
        <name>Cu cation</name>
        <dbReference type="ChEBI" id="CHEBI:23378"/>
        <label>A2</label>
    </ligand>
</feature>
<feature type="binding site" evidence="3">
    <location>
        <position position="204"/>
    </location>
    <ligand>
        <name>Cu cation</name>
        <dbReference type="ChEBI" id="CHEBI:23378"/>
        <label>A2</label>
    </ligand>
</feature>
<feature type="binding site" evidence="3">
    <location>
        <position position="207"/>
    </location>
    <ligand>
        <name>Cu cation</name>
        <dbReference type="ChEBI" id="CHEBI:23378"/>
        <label>A1</label>
    </ligand>
</feature>
<evidence type="ECO:0000250" key="1">
    <source>
        <dbReference type="UniProtKB" id="P00403"/>
    </source>
</evidence>
<evidence type="ECO:0000250" key="2">
    <source>
        <dbReference type="UniProtKB" id="P00410"/>
    </source>
</evidence>
<evidence type="ECO:0000250" key="3">
    <source>
        <dbReference type="UniProtKB" id="P68530"/>
    </source>
</evidence>
<evidence type="ECO:0000305" key="4"/>